<reference key="1">
    <citation type="journal article" date="2009" name="BMC Microbiol.">
        <title>The genome sequence of Geobacter metallireducens: features of metabolism, physiology and regulation common and dissimilar to Geobacter sulfurreducens.</title>
        <authorList>
            <person name="Aklujkar M."/>
            <person name="Krushkal J."/>
            <person name="DiBartolo G."/>
            <person name="Lapidus A."/>
            <person name="Land M.L."/>
            <person name="Lovley D.R."/>
        </authorList>
    </citation>
    <scope>NUCLEOTIDE SEQUENCE [LARGE SCALE GENOMIC DNA]</scope>
    <source>
        <strain>ATCC 53774 / DSM 7210 / GS-15</strain>
    </source>
</reference>
<gene>
    <name evidence="1" type="primary">glmU</name>
    <name type="ordered locus">Gmet_0103</name>
</gene>
<name>GLMU_GEOMG</name>
<feature type="chain" id="PRO_0000244294" description="Bifunctional protein GlmU">
    <location>
        <begin position="1"/>
        <end position="476"/>
    </location>
</feature>
<feature type="region of interest" description="Pyrophosphorylase" evidence="1">
    <location>
        <begin position="1"/>
        <end position="232"/>
    </location>
</feature>
<feature type="region of interest" description="Linker" evidence="1">
    <location>
        <begin position="233"/>
        <end position="253"/>
    </location>
</feature>
<feature type="region of interest" description="N-acetyltransferase" evidence="1">
    <location>
        <begin position="254"/>
        <end position="476"/>
    </location>
</feature>
<feature type="active site" description="Proton acceptor" evidence="1">
    <location>
        <position position="383"/>
    </location>
</feature>
<feature type="binding site" evidence="1">
    <location>
        <begin position="9"/>
        <end position="12"/>
    </location>
    <ligand>
        <name>UDP-N-acetyl-alpha-D-glucosamine</name>
        <dbReference type="ChEBI" id="CHEBI:57705"/>
    </ligand>
</feature>
<feature type="binding site" evidence="1">
    <location>
        <position position="23"/>
    </location>
    <ligand>
        <name>UDP-N-acetyl-alpha-D-glucosamine</name>
        <dbReference type="ChEBI" id="CHEBI:57705"/>
    </ligand>
</feature>
<feature type="binding site" evidence="1">
    <location>
        <position position="75"/>
    </location>
    <ligand>
        <name>UDP-N-acetyl-alpha-D-glucosamine</name>
        <dbReference type="ChEBI" id="CHEBI:57705"/>
    </ligand>
</feature>
<feature type="binding site" evidence="1">
    <location>
        <begin position="80"/>
        <end position="81"/>
    </location>
    <ligand>
        <name>UDP-N-acetyl-alpha-D-glucosamine</name>
        <dbReference type="ChEBI" id="CHEBI:57705"/>
    </ligand>
</feature>
<feature type="binding site" evidence="1">
    <location>
        <position position="105"/>
    </location>
    <ligand>
        <name>Mg(2+)</name>
        <dbReference type="ChEBI" id="CHEBI:18420"/>
    </ligand>
</feature>
<feature type="binding site" evidence="1">
    <location>
        <position position="142"/>
    </location>
    <ligand>
        <name>UDP-N-acetyl-alpha-D-glucosamine</name>
        <dbReference type="ChEBI" id="CHEBI:57705"/>
    </ligand>
</feature>
<feature type="binding site" evidence="1">
    <location>
        <position position="157"/>
    </location>
    <ligand>
        <name>UDP-N-acetyl-alpha-D-glucosamine</name>
        <dbReference type="ChEBI" id="CHEBI:57705"/>
    </ligand>
</feature>
<feature type="binding site" evidence="1">
    <location>
        <position position="172"/>
    </location>
    <ligand>
        <name>UDP-N-acetyl-alpha-D-glucosamine</name>
        <dbReference type="ChEBI" id="CHEBI:57705"/>
    </ligand>
</feature>
<feature type="binding site" evidence="1">
    <location>
        <position position="230"/>
    </location>
    <ligand>
        <name>Mg(2+)</name>
        <dbReference type="ChEBI" id="CHEBI:18420"/>
    </ligand>
</feature>
<feature type="binding site" evidence="1">
    <location>
        <position position="230"/>
    </location>
    <ligand>
        <name>UDP-N-acetyl-alpha-D-glucosamine</name>
        <dbReference type="ChEBI" id="CHEBI:57705"/>
    </ligand>
</feature>
<feature type="binding site" evidence="1">
    <location>
        <position position="353"/>
    </location>
    <ligand>
        <name>UDP-N-acetyl-alpha-D-glucosamine</name>
        <dbReference type="ChEBI" id="CHEBI:57705"/>
    </ligand>
</feature>
<feature type="binding site" evidence="1">
    <location>
        <position position="371"/>
    </location>
    <ligand>
        <name>UDP-N-acetyl-alpha-D-glucosamine</name>
        <dbReference type="ChEBI" id="CHEBI:57705"/>
    </ligand>
</feature>
<feature type="binding site" evidence="1">
    <location>
        <position position="386"/>
    </location>
    <ligand>
        <name>UDP-N-acetyl-alpha-D-glucosamine</name>
        <dbReference type="ChEBI" id="CHEBI:57705"/>
    </ligand>
</feature>
<feature type="binding site" evidence="1">
    <location>
        <position position="397"/>
    </location>
    <ligand>
        <name>UDP-N-acetyl-alpha-D-glucosamine</name>
        <dbReference type="ChEBI" id="CHEBI:57705"/>
    </ligand>
</feature>
<feature type="binding site" evidence="1">
    <location>
        <begin position="406"/>
        <end position="407"/>
    </location>
    <ligand>
        <name>acetyl-CoA</name>
        <dbReference type="ChEBI" id="CHEBI:57288"/>
    </ligand>
</feature>
<feature type="binding site" evidence="1">
    <location>
        <position position="425"/>
    </location>
    <ligand>
        <name>acetyl-CoA</name>
        <dbReference type="ChEBI" id="CHEBI:57288"/>
    </ligand>
</feature>
<feature type="binding site" evidence="1">
    <location>
        <position position="443"/>
    </location>
    <ligand>
        <name>acetyl-CoA</name>
        <dbReference type="ChEBI" id="CHEBI:57288"/>
    </ligand>
</feature>
<feature type="binding site" evidence="1">
    <location>
        <position position="460"/>
    </location>
    <ligand>
        <name>acetyl-CoA</name>
        <dbReference type="ChEBI" id="CHEBI:57288"/>
    </ligand>
</feature>
<protein>
    <recommendedName>
        <fullName evidence="1">Bifunctional protein GlmU</fullName>
    </recommendedName>
    <domain>
        <recommendedName>
            <fullName evidence="1">UDP-N-acetylglucosamine pyrophosphorylase</fullName>
            <ecNumber evidence="1">2.7.7.23</ecNumber>
        </recommendedName>
        <alternativeName>
            <fullName evidence="1">N-acetylglucosamine-1-phosphate uridyltransferase</fullName>
        </alternativeName>
    </domain>
    <domain>
        <recommendedName>
            <fullName evidence="1">Glucosamine-1-phosphate N-acetyltransferase</fullName>
            <ecNumber evidence="1">2.3.1.157</ecNumber>
        </recommendedName>
    </domain>
</protein>
<proteinExistence type="inferred from homology"/>
<sequence>MGDLAAIILAAGKGTRMKSDLVKVMHPLAGAPMVAWPVEAARQAGTSRMVLVVGHQADTIREHFAGTEQVAFALQEEQLGTGHAVASAAAALDGFTGRVLILCGDVPLIRPETLRGMIDAHGATGAALTVLTTRLENPFGYGRIIRGFDGRVIRIVEEKDATPEERGRREVNAGIYCAEAAFLFDAVTRIGNDNAQGEYYLTDIVTMANEQGLRCTAHPVADPVEVMGVNDRAQLAEAGRFARQRINRELMLDGVTIVDPAATYIDRGAVVGRDTTVHPGVHLSGETRIGEGCTIEQGAVIKGSTLGNGCVVEPGAVIRSCRLGSHVMVKAGSVMEDAIIHDHTAIGPMAHLRPGTELMAHVKIGNFVETKKITMGEGSKASHLTYLGDASIGNNVNVGCGTITCNYDGVRKHRTVIEDDVFVGSDVQFVAPVTVGRNSLIAAGTTVTRDVPPDSLAIARAPQVNKDGWKLKQRDQ</sequence>
<evidence type="ECO:0000255" key="1">
    <source>
        <dbReference type="HAMAP-Rule" id="MF_01631"/>
    </source>
</evidence>
<comment type="function">
    <text evidence="1">Catalyzes the last two sequential reactions in the de novo biosynthetic pathway for UDP-N-acetylglucosamine (UDP-GlcNAc). The C-terminal domain catalyzes the transfer of acetyl group from acetyl coenzyme A to glucosamine-1-phosphate (GlcN-1-P) to produce N-acetylglucosamine-1-phosphate (GlcNAc-1-P), which is converted into UDP-GlcNAc by the transfer of uridine 5-monophosphate (from uridine 5-triphosphate), a reaction catalyzed by the N-terminal domain.</text>
</comment>
<comment type="catalytic activity">
    <reaction evidence="1">
        <text>alpha-D-glucosamine 1-phosphate + acetyl-CoA = N-acetyl-alpha-D-glucosamine 1-phosphate + CoA + H(+)</text>
        <dbReference type="Rhea" id="RHEA:13725"/>
        <dbReference type="ChEBI" id="CHEBI:15378"/>
        <dbReference type="ChEBI" id="CHEBI:57287"/>
        <dbReference type="ChEBI" id="CHEBI:57288"/>
        <dbReference type="ChEBI" id="CHEBI:57776"/>
        <dbReference type="ChEBI" id="CHEBI:58516"/>
        <dbReference type="EC" id="2.3.1.157"/>
    </reaction>
</comment>
<comment type="catalytic activity">
    <reaction evidence="1">
        <text>N-acetyl-alpha-D-glucosamine 1-phosphate + UTP + H(+) = UDP-N-acetyl-alpha-D-glucosamine + diphosphate</text>
        <dbReference type="Rhea" id="RHEA:13509"/>
        <dbReference type="ChEBI" id="CHEBI:15378"/>
        <dbReference type="ChEBI" id="CHEBI:33019"/>
        <dbReference type="ChEBI" id="CHEBI:46398"/>
        <dbReference type="ChEBI" id="CHEBI:57705"/>
        <dbReference type="ChEBI" id="CHEBI:57776"/>
        <dbReference type="EC" id="2.7.7.23"/>
    </reaction>
</comment>
<comment type="cofactor">
    <cofactor evidence="1">
        <name>Mg(2+)</name>
        <dbReference type="ChEBI" id="CHEBI:18420"/>
    </cofactor>
    <text evidence="1">Binds 1 Mg(2+) ion per subunit.</text>
</comment>
<comment type="pathway">
    <text evidence="1">Nucleotide-sugar biosynthesis; UDP-N-acetyl-alpha-D-glucosamine biosynthesis; N-acetyl-alpha-D-glucosamine 1-phosphate from alpha-D-glucosamine 6-phosphate (route II): step 2/2.</text>
</comment>
<comment type="pathway">
    <text evidence="1">Nucleotide-sugar biosynthesis; UDP-N-acetyl-alpha-D-glucosamine biosynthesis; UDP-N-acetyl-alpha-D-glucosamine from N-acetyl-alpha-D-glucosamine 1-phosphate: step 1/1.</text>
</comment>
<comment type="pathway">
    <text evidence="1">Bacterial outer membrane biogenesis; LPS lipid A biosynthesis.</text>
</comment>
<comment type="subunit">
    <text evidence="1">Homotrimer.</text>
</comment>
<comment type="subcellular location">
    <subcellularLocation>
        <location evidence="1">Cytoplasm</location>
    </subcellularLocation>
</comment>
<comment type="similarity">
    <text evidence="1">In the N-terminal section; belongs to the N-acetylglucosamine-1-phosphate uridyltransferase family.</text>
</comment>
<comment type="similarity">
    <text evidence="1">In the C-terminal section; belongs to the transferase hexapeptide repeat family.</text>
</comment>
<organism>
    <name type="scientific">Geobacter metallireducens (strain ATCC 53774 / DSM 7210 / GS-15)</name>
    <dbReference type="NCBI Taxonomy" id="269799"/>
    <lineage>
        <taxon>Bacteria</taxon>
        <taxon>Pseudomonadati</taxon>
        <taxon>Thermodesulfobacteriota</taxon>
        <taxon>Desulfuromonadia</taxon>
        <taxon>Geobacterales</taxon>
        <taxon>Geobacteraceae</taxon>
        <taxon>Geobacter</taxon>
    </lineage>
</organism>
<keyword id="KW-0012">Acyltransferase</keyword>
<keyword id="KW-0133">Cell shape</keyword>
<keyword id="KW-0961">Cell wall biogenesis/degradation</keyword>
<keyword id="KW-0963">Cytoplasm</keyword>
<keyword id="KW-0460">Magnesium</keyword>
<keyword id="KW-0479">Metal-binding</keyword>
<keyword id="KW-0511">Multifunctional enzyme</keyword>
<keyword id="KW-0548">Nucleotidyltransferase</keyword>
<keyword id="KW-0573">Peptidoglycan synthesis</keyword>
<keyword id="KW-1185">Reference proteome</keyword>
<keyword id="KW-0677">Repeat</keyword>
<keyword id="KW-0808">Transferase</keyword>
<accession>Q39ZH2</accession>
<dbReference type="EC" id="2.7.7.23" evidence="1"/>
<dbReference type="EC" id="2.3.1.157" evidence="1"/>
<dbReference type="EMBL" id="CP000148">
    <property type="protein sequence ID" value="ABB30352.1"/>
    <property type="molecule type" value="Genomic_DNA"/>
</dbReference>
<dbReference type="RefSeq" id="WP_004514108.1">
    <property type="nucleotide sequence ID" value="NC_007517.1"/>
</dbReference>
<dbReference type="SMR" id="Q39ZH2"/>
<dbReference type="STRING" id="269799.Gmet_0103"/>
<dbReference type="KEGG" id="gme:Gmet_0103"/>
<dbReference type="eggNOG" id="COG1207">
    <property type="taxonomic scope" value="Bacteria"/>
</dbReference>
<dbReference type="HOGENOM" id="CLU_029499_15_2_7"/>
<dbReference type="UniPathway" id="UPA00113">
    <property type="reaction ID" value="UER00532"/>
</dbReference>
<dbReference type="UniPathway" id="UPA00113">
    <property type="reaction ID" value="UER00533"/>
</dbReference>
<dbReference type="UniPathway" id="UPA00973"/>
<dbReference type="Proteomes" id="UP000007073">
    <property type="component" value="Chromosome"/>
</dbReference>
<dbReference type="GO" id="GO:0005737">
    <property type="term" value="C:cytoplasm"/>
    <property type="evidence" value="ECO:0007669"/>
    <property type="project" value="UniProtKB-SubCell"/>
</dbReference>
<dbReference type="GO" id="GO:0016020">
    <property type="term" value="C:membrane"/>
    <property type="evidence" value="ECO:0007669"/>
    <property type="project" value="GOC"/>
</dbReference>
<dbReference type="GO" id="GO:0019134">
    <property type="term" value="F:glucosamine-1-phosphate N-acetyltransferase activity"/>
    <property type="evidence" value="ECO:0007669"/>
    <property type="project" value="UniProtKB-UniRule"/>
</dbReference>
<dbReference type="GO" id="GO:0000287">
    <property type="term" value="F:magnesium ion binding"/>
    <property type="evidence" value="ECO:0007669"/>
    <property type="project" value="UniProtKB-UniRule"/>
</dbReference>
<dbReference type="GO" id="GO:0003977">
    <property type="term" value="F:UDP-N-acetylglucosamine diphosphorylase activity"/>
    <property type="evidence" value="ECO:0007669"/>
    <property type="project" value="UniProtKB-UniRule"/>
</dbReference>
<dbReference type="GO" id="GO:0000902">
    <property type="term" value="P:cell morphogenesis"/>
    <property type="evidence" value="ECO:0007669"/>
    <property type="project" value="UniProtKB-UniRule"/>
</dbReference>
<dbReference type="GO" id="GO:0071555">
    <property type="term" value="P:cell wall organization"/>
    <property type="evidence" value="ECO:0007669"/>
    <property type="project" value="UniProtKB-KW"/>
</dbReference>
<dbReference type="GO" id="GO:0009245">
    <property type="term" value="P:lipid A biosynthetic process"/>
    <property type="evidence" value="ECO:0007669"/>
    <property type="project" value="UniProtKB-UniRule"/>
</dbReference>
<dbReference type="GO" id="GO:0009252">
    <property type="term" value="P:peptidoglycan biosynthetic process"/>
    <property type="evidence" value="ECO:0007669"/>
    <property type="project" value="UniProtKB-UniRule"/>
</dbReference>
<dbReference type="GO" id="GO:0008360">
    <property type="term" value="P:regulation of cell shape"/>
    <property type="evidence" value="ECO:0007669"/>
    <property type="project" value="UniProtKB-KW"/>
</dbReference>
<dbReference type="GO" id="GO:0006048">
    <property type="term" value="P:UDP-N-acetylglucosamine biosynthetic process"/>
    <property type="evidence" value="ECO:0007669"/>
    <property type="project" value="UniProtKB-UniPathway"/>
</dbReference>
<dbReference type="CDD" id="cd02540">
    <property type="entry name" value="GT2_GlmU_N_bac"/>
    <property type="match status" value="1"/>
</dbReference>
<dbReference type="CDD" id="cd03353">
    <property type="entry name" value="LbH_GlmU_C"/>
    <property type="match status" value="1"/>
</dbReference>
<dbReference type="Gene3D" id="2.160.10.10">
    <property type="entry name" value="Hexapeptide repeat proteins"/>
    <property type="match status" value="2"/>
</dbReference>
<dbReference type="Gene3D" id="3.90.550.10">
    <property type="entry name" value="Spore Coat Polysaccharide Biosynthesis Protein SpsA, Chain A"/>
    <property type="match status" value="1"/>
</dbReference>
<dbReference type="HAMAP" id="MF_01631">
    <property type="entry name" value="GlmU"/>
    <property type="match status" value="1"/>
</dbReference>
<dbReference type="InterPro" id="IPR005882">
    <property type="entry name" value="Bifunctional_GlmU"/>
</dbReference>
<dbReference type="InterPro" id="IPR050065">
    <property type="entry name" value="GlmU-like"/>
</dbReference>
<dbReference type="InterPro" id="IPR038009">
    <property type="entry name" value="GlmU_C_LbH"/>
</dbReference>
<dbReference type="InterPro" id="IPR001451">
    <property type="entry name" value="Hexapep"/>
</dbReference>
<dbReference type="InterPro" id="IPR025877">
    <property type="entry name" value="MobA-like_NTP_Trfase"/>
</dbReference>
<dbReference type="InterPro" id="IPR029044">
    <property type="entry name" value="Nucleotide-diphossugar_trans"/>
</dbReference>
<dbReference type="InterPro" id="IPR011004">
    <property type="entry name" value="Trimer_LpxA-like_sf"/>
</dbReference>
<dbReference type="NCBIfam" id="NF010935">
    <property type="entry name" value="PRK14355.1"/>
    <property type="match status" value="1"/>
</dbReference>
<dbReference type="PANTHER" id="PTHR43584:SF3">
    <property type="entry name" value="BIFUNCTIONAL PROTEIN GLMU"/>
    <property type="match status" value="1"/>
</dbReference>
<dbReference type="PANTHER" id="PTHR43584">
    <property type="entry name" value="NUCLEOTIDYL TRANSFERASE"/>
    <property type="match status" value="1"/>
</dbReference>
<dbReference type="Pfam" id="PF00132">
    <property type="entry name" value="Hexapep"/>
    <property type="match status" value="2"/>
</dbReference>
<dbReference type="Pfam" id="PF12804">
    <property type="entry name" value="NTP_transf_3"/>
    <property type="match status" value="1"/>
</dbReference>
<dbReference type="SUPFAM" id="SSF53448">
    <property type="entry name" value="Nucleotide-diphospho-sugar transferases"/>
    <property type="match status" value="1"/>
</dbReference>
<dbReference type="SUPFAM" id="SSF51161">
    <property type="entry name" value="Trimeric LpxA-like enzymes"/>
    <property type="match status" value="1"/>
</dbReference>